<protein>
    <recommendedName>
        <fullName evidence="9">Eukaryotic translation initiation factor 4E-2</fullName>
        <shortName evidence="9">eIF4E-2</shortName>
    </recommendedName>
    <alternativeName>
        <fullName evidence="10">eIF-4F 25 kDa subunit</fullName>
    </alternativeName>
    <alternativeName>
        <fullName evidence="10">eIF-4F p26 subunit</fullName>
    </alternativeName>
    <alternativeName>
        <fullName evidence="10">mRNA cap-binding protein</fullName>
    </alternativeName>
</protein>
<gene>
    <name evidence="9" type="primary">eIF4E2</name>
    <name evidence="10" type="ordered locus">Solyc02g021550</name>
</gene>
<sequence length="221" mass="25104">MADELNKAALEEYKSSSVEDRGEEGEIVGESDDTASSLGKQITMKHPLEHSWTFWFDNPSGKSKQAAWGSSIRPIYTFSTAEDFWSVYNNIHHPSKLAVGADFHCFKNKIEPKWEDPVCANGGKWTMNFSRGKSDTCWLYTLLALIGEQFDYGDEICGAVINVRVRQEKIALWTRNAANETAQVSIGKQWKEFLDYNDTIGFIFHDDAKKLDRAAKNRYSV</sequence>
<feature type="chain" id="PRO_0000454061" description="Eukaryotic translation initiation factor 4E-2">
    <location>
        <begin position="1"/>
        <end position="221"/>
    </location>
</feature>
<feature type="region of interest" description="Disordered" evidence="5">
    <location>
        <begin position="1"/>
        <end position="36"/>
    </location>
</feature>
<feature type="region of interest" description="EIF4G-binding" evidence="3">
    <location>
        <begin position="46"/>
        <end position="49"/>
    </location>
</feature>
<feature type="region of interest" description="EIF4G-binding" evidence="3">
    <location>
        <begin position="56"/>
        <end position="92"/>
    </location>
</feature>
<feature type="region of interest" description="EIF4G-binding" evidence="3">
    <location>
        <begin position="140"/>
        <end position="149"/>
    </location>
</feature>
<feature type="compositionally biased region" description="Basic and acidic residues" evidence="5">
    <location>
        <begin position="1"/>
        <end position="20"/>
    </location>
</feature>
<feature type="compositionally biased region" description="Acidic residues" evidence="5">
    <location>
        <begin position="21"/>
        <end position="33"/>
    </location>
</feature>
<feature type="binding site" evidence="2">
    <location>
        <begin position="64"/>
        <end position="69"/>
    </location>
    <ligand>
        <name>mRNA</name>
        <dbReference type="ChEBI" id="CHEBI:33699"/>
    </ligand>
    <ligandPart>
        <name>N(7)-methylguanosine 5'-triphosphate group</name>
        <dbReference type="ChEBI" id="CHEBI:74429"/>
        <note>m7GTP residue in mRNA cap</note>
    </ligandPart>
</feature>
<feature type="binding site" evidence="2">
    <location>
        <position position="96"/>
    </location>
    <ligand>
        <name>mRNA</name>
        <dbReference type="ChEBI" id="CHEBI:33699"/>
    </ligand>
    <ligandPart>
        <name>N(7)-methylguanosine 5'-triphosphate group</name>
        <dbReference type="ChEBI" id="CHEBI:74429"/>
        <note>m7GTP residue in mRNA cap</note>
    </ligandPart>
</feature>
<feature type="binding site" evidence="2">
    <location>
        <begin position="114"/>
        <end position="115"/>
    </location>
    <ligand>
        <name>mRNA</name>
        <dbReference type="ChEBI" id="CHEBI:33699"/>
    </ligand>
    <ligandPart>
        <name>N(7)-methylguanosine 5'-triphosphate group</name>
        <dbReference type="ChEBI" id="CHEBI:74429"/>
        <note>m7GTP residue in mRNA cap</note>
    </ligandPart>
</feature>
<feature type="binding site" evidence="2">
    <location>
        <begin position="164"/>
        <end position="169"/>
    </location>
    <ligand>
        <name>mRNA</name>
        <dbReference type="ChEBI" id="CHEBI:33699"/>
    </ligand>
    <ligandPart>
        <name>N(7)-methylguanosine 5'-triphosphate group</name>
        <dbReference type="ChEBI" id="CHEBI:74429"/>
        <note>m7GTP residue in mRNA cap</note>
    </ligandPart>
</feature>
<feature type="binding site" evidence="3">
    <location>
        <begin position="209"/>
        <end position="213"/>
    </location>
    <ligand>
        <name>mRNA</name>
        <dbReference type="ChEBI" id="CHEBI:33699"/>
    </ligand>
    <ligandPart>
        <name>N(7)-methylguanosine 5'-triphosphate group</name>
        <dbReference type="ChEBI" id="CHEBI:74429"/>
        <note>m7GTP residue in mRNA cap</note>
    </ligandPart>
</feature>
<feature type="disulfide bond" evidence="2">
    <location>
        <begin position="119"/>
        <end position="157"/>
    </location>
</feature>
<proteinExistence type="evidence at protein level"/>
<keyword id="KW-0963">Cytoplasm</keyword>
<keyword id="KW-1015">Disulfide bond</keyword>
<keyword id="KW-0945">Host-virus interaction</keyword>
<keyword id="KW-0396">Initiation factor</keyword>
<keyword id="KW-0539">Nucleus</keyword>
<keyword id="KW-0611">Plant defense</keyword>
<keyword id="KW-0648">Protein biosynthesis</keyword>
<keyword id="KW-1185">Reference proteome</keyword>
<keyword id="KW-0694">RNA-binding</keyword>
<keyword id="KW-0810">Translation regulation</keyword>
<evidence type="ECO:0000250" key="1">
    <source>
        <dbReference type="UniProtKB" id="C6ZJZ3"/>
    </source>
</evidence>
<evidence type="ECO:0000250" key="2">
    <source>
        <dbReference type="UniProtKB" id="P29557"/>
    </source>
</evidence>
<evidence type="ECO:0000250" key="3">
    <source>
        <dbReference type="UniProtKB" id="Q00LS8"/>
    </source>
</evidence>
<evidence type="ECO:0000250" key="4">
    <source>
        <dbReference type="UniProtKB" id="Q4VQY3"/>
    </source>
</evidence>
<evidence type="ECO:0000256" key="5">
    <source>
        <dbReference type="SAM" id="MobiDB-lite"/>
    </source>
</evidence>
<evidence type="ECO:0000269" key="6">
    <source>
    </source>
</evidence>
<evidence type="ECO:0000269" key="7">
    <source>
    </source>
</evidence>
<evidence type="ECO:0000269" key="8">
    <source>
    </source>
</evidence>
<evidence type="ECO:0000303" key="9">
    <source>
    </source>
</evidence>
<evidence type="ECO:0000305" key="10"/>
<comment type="function">
    <text evidence="2 4 6 7 8">Component of the protein complex eIF4F, which is involved in the recognition of the mRNA cap, ATP-dependent unwinding of 5'-terminal secondary structure and recruitment of mRNA to the ribosome (By similarity). Recognizes and binds the 7-methylguanosine-containing mRNA cap during an early step in the initiation of protein synthesis and facilitates ribosome binding by inducing the unwinding of the mRNAs secondary structures (By similarity). Key component of recessive resistance to potyviruses (PubMed:22242134, PubMed:26850324, PubMed:27655175).</text>
</comment>
<comment type="function">
    <text evidence="6 7 8">(Microbial infection) Susceptibility host factor required for viral infection (e.g. potato virus Y (PVY) and tobacco etch virus (TEV)) by recruiting viral RNAs to the host ribosomal complex via an interaction with viral genome-linked protein (VPg).</text>
</comment>
<comment type="subunit">
    <text evidence="2">EIF4F is a multi-subunit complex, the composition of which varies with external and internal environmental conditions (By similarity). It is composed of at least EIF4A, EIF4E and EIF4G. EIF4E is also known to interact with other partners (By similarity). In higher plants two isoforms of EIF4F have been identified, named isoform EIF4F and isoform EIF(iso)4F (By similarity). Isoform EIF4F has subunits p220 and p26, whereas isoform EIF(iso)4F has subunits p82 and p28 (By similarity).</text>
</comment>
<comment type="subunit">
    <text evidence="6">(Microbial infection) Interacts with potyvirus viral genome-linked protein (VPg) in the nucleus; mostly potato virus Y (PVY-LYE84) and tobacco etch virus (TEV-HAT) VPg, but not with PVY-LYE90 and pepper mottle virus (PepMoV) VPg; these interactions are possible in susceptible hosts but impaired in resistant plants.</text>
</comment>
<comment type="subcellular location">
    <subcellularLocation>
        <location evidence="1">Nucleus</location>
    </subcellularLocation>
    <subcellularLocation>
        <location evidence="1">Cytoplasm</location>
    </subcellularLocation>
</comment>
<comment type="PTM">
    <text evidence="2">According to the redox status, the Cys-119-Cys-157 disulfide bridge may have a role in regulating protein function by affecting its ability to bind capped mRNA.</text>
</comment>
<comment type="disruption phenotype">
    <text evidence="6 7 8">Slightly impaired growth and fertility (PubMed:22242134). Plants lacking both eIF4E1 and eIF4E2 display pleiotropic effect on plant development but are resistant specifically to several potyviruses including potato virus Y (PVY, strains N605, LYE72, LYE90 and LYE84), tobacco etch virus (TEV, strains HAT, CAA10 and S103), pepper mottle virus (PepMoV), Ecuadorian rocotto virus (ERV), pepper severe mosaic virus (PepSMV), pepper yellow mosaic virus (PepYMV), and potato virus V (PVV) (PubMed:22242134, PubMed:26850324, PubMed:27655175). Plants lacking eIFiso4E, eIF4E1 and eIF4E2 exhibit a semi-dwarf phenotype (PubMed:22242134).</text>
</comment>
<comment type="similarity">
    <text evidence="10">Belongs to the eukaryotic initiation factor 4E family.</text>
</comment>
<accession>A0A3Q7FGP1</accession>
<name>IF4E2_SOLLC</name>
<dbReference type="RefSeq" id="NP_001307578.1">
    <property type="nucleotide sequence ID" value="NM_001320649.1"/>
</dbReference>
<dbReference type="SMR" id="A0A3Q7FGP1"/>
<dbReference type="FunCoup" id="A0A3Q7FGP1">
    <property type="interactions" value="2893"/>
</dbReference>
<dbReference type="STRING" id="4081.A0A3Q7FGP1"/>
<dbReference type="PaxDb" id="4081-Solyc02g021550.2.1"/>
<dbReference type="EnsemblPlants" id="Solyc02g021550.3.1">
    <property type="protein sequence ID" value="Solyc02g021550.3.1"/>
    <property type="gene ID" value="Solyc02g021550.3"/>
</dbReference>
<dbReference type="GeneID" id="101261276"/>
<dbReference type="Gramene" id="Solyc02g021550.3.1">
    <property type="protein sequence ID" value="Solyc02g021550.3.1"/>
    <property type="gene ID" value="Solyc02g021550.3"/>
</dbReference>
<dbReference type="KEGG" id="sly:101261276"/>
<dbReference type="InParanoid" id="A0A3Q7FGP1"/>
<dbReference type="OMA" id="QTEFKMM"/>
<dbReference type="OrthoDB" id="590761at2759"/>
<dbReference type="Proteomes" id="UP000004994">
    <property type="component" value="Chromosome 2"/>
</dbReference>
<dbReference type="GO" id="GO:0005737">
    <property type="term" value="C:cytoplasm"/>
    <property type="evidence" value="ECO:0000250"/>
    <property type="project" value="UniProtKB"/>
</dbReference>
<dbReference type="GO" id="GO:0016281">
    <property type="term" value="C:eukaryotic translation initiation factor 4F complex"/>
    <property type="evidence" value="ECO:0000318"/>
    <property type="project" value="GO_Central"/>
</dbReference>
<dbReference type="GO" id="GO:0005634">
    <property type="term" value="C:nucleus"/>
    <property type="evidence" value="ECO:0000250"/>
    <property type="project" value="UniProtKB"/>
</dbReference>
<dbReference type="GO" id="GO:0000340">
    <property type="term" value="F:RNA 7-methylguanosine cap binding"/>
    <property type="evidence" value="ECO:0000318"/>
    <property type="project" value="GO_Central"/>
</dbReference>
<dbReference type="GO" id="GO:0003723">
    <property type="term" value="F:RNA binding"/>
    <property type="evidence" value="ECO:0000250"/>
    <property type="project" value="UniProtKB"/>
</dbReference>
<dbReference type="GO" id="GO:0003743">
    <property type="term" value="F:translation initiation factor activity"/>
    <property type="evidence" value="ECO:0000250"/>
    <property type="project" value="UniProtKB"/>
</dbReference>
<dbReference type="GO" id="GO:0051607">
    <property type="term" value="P:defense response to virus"/>
    <property type="evidence" value="ECO:0000315"/>
    <property type="project" value="UniProtKB"/>
</dbReference>
<dbReference type="GO" id="GO:0006417">
    <property type="term" value="P:regulation of translation"/>
    <property type="evidence" value="ECO:0007669"/>
    <property type="project" value="UniProtKB-KW"/>
</dbReference>
<dbReference type="GO" id="GO:0006413">
    <property type="term" value="P:translational initiation"/>
    <property type="evidence" value="ECO:0000250"/>
    <property type="project" value="UniProtKB"/>
</dbReference>
<dbReference type="FunFam" id="3.30.760.10:FF:000003">
    <property type="entry name" value="Eukaryotic translation initiation factor 4E"/>
    <property type="match status" value="1"/>
</dbReference>
<dbReference type="Gene3D" id="3.30.760.10">
    <property type="entry name" value="RNA Cap, Translation Initiation Factor Eif4e"/>
    <property type="match status" value="1"/>
</dbReference>
<dbReference type="InterPro" id="IPR023398">
    <property type="entry name" value="TIF_eIF4e-like"/>
</dbReference>
<dbReference type="InterPro" id="IPR001040">
    <property type="entry name" value="TIF_eIF_4E"/>
</dbReference>
<dbReference type="InterPro" id="IPR019770">
    <property type="entry name" value="TIF_eIF_4E_CS"/>
</dbReference>
<dbReference type="PANTHER" id="PTHR11960">
    <property type="entry name" value="EUKARYOTIC TRANSLATION INITIATION FACTOR 4E RELATED"/>
    <property type="match status" value="1"/>
</dbReference>
<dbReference type="PANTHER" id="PTHR11960:SF8">
    <property type="entry name" value="EUKARYOTIC TRANSLATION INITIATION FACTOR 4E1-RELATED"/>
    <property type="match status" value="1"/>
</dbReference>
<dbReference type="Pfam" id="PF01652">
    <property type="entry name" value="IF4E"/>
    <property type="match status" value="1"/>
</dbReference>
<dbReference type="SUPFAM" id="SSF55418">
    <property type="entry name" value="eIF4e-like"/>
    <property type="match status" value="1"/>
</dbReference>
<dbReference type="PROSITE" id="PS00813">
    <property type="entry name" value="IF4E"/>
    <property type="match status" value="1"/>
</dbReference>
<organism>
    <name type="scientific">Solanum lycopersicum</name>
    <name type="common">Tomato</name>
    <name type="synonym">Lycopersicon esculentum</name>
    <dbReference type="NCBI Taxonomy" id="4081"/>
    <lineage>
        <taxon>Eukaryota</taxon>
        <taxon>Viridiplantae</taxon>
        <taxon>Streptophyta</taxon>
        <taxon>Embryophyta</taxon>
        <taxon>Tracheophyta</taxon>
        <taxon>Spermatophyta</taxon>
        <taxon>Magnoliopsida</taxon>
        <taxon>eudicotyledons</taxon>
        <taxon>Gunneridae</taxon>
        <taxon>Pentapetalae</taxon>
        <taxon>asterids</taxon>
        <taxon>lamiids</taxon>
        <taxon>Solanales</taxon>
        <taxon>Solanaceae</taxon>
        <taxon>Solanoideae</taxon>
        <taxon>Solaneae</taxon>
        <taxon>Solanum</taxon>
        <taxon>Solanum subgen. Lycopersicon</taxon>
    </lineage>
</organism>
<reference key="1">
    <citation type="journal article" date="2012" name="Nature">
        <title>The tomato genome sequence provides insights into fleshy fruit evolution.</title>
        <authorList>
            <consortium name="Tomato Genome Consortium"/>
        </authorList>
    </citation>
    <scope>NUCLEOTIDE SEQUENCE [LARGE SCALE GENOMIC DNA]</scope>
    <source>
        <strain>cv. Heinz 1706</strain>
    </source>
</reference>
<reference key="2">
    <citation type="journal article" date="2011" name="PLoS ONE">
        <title>Knock-down of both eIF4E1 and eIF4E2 genes confers broad-spectrum resistance against potyviruses in tomato.</title>
        <authorList>
            <person name="Mazier M."/>
            <person name="Flamain F."/>
            <person name="Nicolai M."/>
            <person name="Sarnette V."/>
            <person name="Caranta C."/>
        </authorList>
    </citation>
    <scope>FUNCTION</scope>
    <scope>FUNCTION (MICROBIAL INFECTION)</scope>
    <scope>DISRUPTION PHENOTYPE</scope>
    <scope>INTERACTION WITH POTYVIRUS VPG (MICROBIAL INFECTION)</scope>
    <source>
        <strain>cv. WVA106</strain>
    </source>
</reference>
<reference key="3">
    <citation type="journal article" date="2014" name="Infect. Genet. Evol.">
        <title>Evolution of plant eukaryotic initiation factor 4E (eIF4E) and potyvirus genome-linked protein (VPg): a game of mirrors impacting resistance spectrum and durability.</title>
        <authorList>
            <person name="Moury B."/>
            <person name="Charron C."/>
            <person name="Janzac B."/>
            <person name="Simon V."/>
            <person name="Gallois J.L."/>
            <person name="Palloix A."/>
            <person name="Caranta C."/>
        </authorList>
    </citation>
    <scope>GENE FAMILY</scope>
    <scope>REVIEW</scope>
</reference>
<reference key="4">
    <citation type="journal article" date="2016" name="J. Gen. Virol.">
        <title>A new eIF4E1 allele characterized by RNAseq data mining is associated with resistance to potato virus Y in tomato albeit with a low durability.</title>
        <authorList>
            <person name="Lebaron C."/>
            <person name="Rosado A."/>
            <person name="Sauvage C."/>
            <person name="Gauffier C."/>
            <person name="German-Retana S."/>
            <person name="Moury B."/>
            <person name="Gallois J.-L."/>
        </authorList>
    </citation>
    <scope>FUNCTION</scope>
    <scope>FUNCTION (MICROBIAL INFECTION)</scope>
    <scope>DISRUPTION PHENOTYPE</scope>
    <source>
        <strain>cv. M82</strain>
    </source>
</reference>
<reference key="5">
    <citation type="journal article" date="2016" name="Plant J.">
        <title>A TILLING approach to generate broad-spectrum resistance to potyviruses in tomato is hampered by eIF4E gene redundancy.</title>
        <authorList>
            <person name="Gauffier C."/>
            <person name="Lebaron C."/>
            <person name="Moretti A."/>
            <person name="Constant C."/>
            <person name="Moquet F."/>
            <person name="Bonnet G."/>
            <person name="Caranta C."/>
            <person name="Gallois J.-L."/>
        </authorList>
    </citation>
    <scope>FUNCTION</scope>
    <scope>FUNCTION (MICROBIAL INFECTION)</scope>
    <scope>DISRUPTION PHENOTYPE</scope>
    <source>
        <strain>cv. M82</strain>
    </source>
</reference>